<protein>
    <recommendedName>
        <fullName evidence="1">Phosphoribosylformylglycinamidine cyclo-ligase</fullName>
        <ecNumber evidence="1">6.3.3.1</ecNumber>
    </recommendedName>
    <alternativeName>
        <fullName evidence="1">AIR synthase</fullName>
    </alternativeName>
    <alternativeName>
        <fullName evidence="1">AIRS</fullName>
    </alternativeName>
    <alternativeName>
        <fullName evidence="1">Phosphoribosyl-aminoimidazole synthetase</fullName>
    </alternativeName>
</protein>
<sequence length="353" mass="37219">MAHNQDASSPSGMTYRDAGVDIDAGNRLVSMIKRSVASTHRPEVRSDLGGFGALFDLDTRKYQDPVLVSATDGVGTKLKLAFLTGKHDTVGIDLVAMSVNDLVVQGAEPLFFLDYFACGKLSPETAATVVEGIATGCRAAGCALIGGETAEMPGFYTEGEYDLAGFAVGAVDKHKIIDGRHISPGDAIIGLASSGPHSNGYSLIRKLVLGQSGPGLEADFNGKPLGEVLLTPTHIYVLPLLELAKTHAIHGLVHITGGGFWENIPRILPDATGALLKRSCWQQPEVFNLLQKLGNIAEDEMLRTFNCGLGMLVIVPATQADSALAQLRAAGEQAELVGEITSCKEGDARVVIL</sequence>
<dbReference type="EC" id="6.3.3.1" evidence="1"/>
<dbReference type="EMBL" id="CP000471">
    <property type="protein sequence ID" value="ABK44816.1"/>
    <property type="molecule type" value="Genomic_DNA"/>
</dbReference>
<dbReference type="RefSeq" id="WP_011713937.1">
    <property type="nucleotide sequence ID" value="NC_008576.1"/>
</dbReference>
<dbReference type="SMR" id="A0LA23"/>
<dbReference type="STRING" id="156889.Mmc1_2316"/>
<dbReference type="KEGG" id="mgm:Mmc1_2316"/>
<dbReference type="eggNOG" id="COG0150">
    <property type="taxonomic scope" value="Bacteria"/>
</dbReference>
<dbReference type="HOGENOM" id="CLU_047116_0_0_5"/>
<dbReference type="OrthoDB" id="9777881at2"/>
<dbReference type="UniPathway" id="UPA00074">
    <property type="reaction ID" value="UER00129"/>
</dbReference>
<dbReference type="Proteomes" id="UP000002586">
    <property type="component" value="Chromosome"/>
</dbReference>
<dbReference type="GO" id="GO:0005829">
    <property type="term" value="C:cytosol"/>
    <property type="evidence" value="ECO:0007669"/>
    <property type="project" value="TreeGrafter"/>
</dbReference>
<dbReference type="GO" id="GO:0005524">
    <property type="term" value="F:ATP binding"/>
    <property type="evidence" value="ECO:0007669"/>
    <property type="project" value="UniProtKB-KW"/>
</dbReference>
<dbReference type="GO" id="GO:0004637">
    <property type="term" value="F:phosphoribosylamine-glycine ligase activity"/>
    <property type="evidence" value="ECO:0007669"/>
    <property type="project" value="TreeGrafter"/>
</dbReference>
<dbReference type="GO" id="GO:0004641">
    <property type="term" value="F:phosphoribosylformylglycinamidine cyclo-ligase activity"/>
    <property type="evidence" value="ECO:0007669"/>
    <property type="project" value="UniProtKB-UniRule"/>
</dbReference>
<dbReference type="GO" id="GO:0006189">
    <property type="term" value="P:'de novo' IMP biosynthetic process"/>
    <property type="evidence" value="ECO:0007669"/>
    <property type="project" value="UniProtKB-UniRule"/>
</dbReference>
<dbReference type="GO" id="GO:0046084">
    <property type="term" value="P:adenine biosynthetic process"/>
    <property type="evidence" value="ECO:0007669"/>
    <property type="project" value="TreeGrafter"/>
</dbReference>
<dbReference type="CDD" id="cd02196">
    <property type="entry name" value="PurM"/>
    <property type="match status" value="1"/>
</dbReference>
<dbReference type="FunFam" id="3.30.1330.10:FF:000001">
    <property type="entry name" value="Phosphoribosylformylglycinamidine cyclo-ligase"/>
    <property type="match status" value="1"/>
</dbReference>
<dbReference type="FunFam" id="3.90.650.10:FF:000001">
    <property type="entry name" value="Phosphoribosylformylglycinamidine cyclo-ligase"/>
    <property type="match status" value="1"/>
</dbReference>
<dbReference type="Gene3D" id="3.90.650.10">
    <property type="entry name" value="PurM-like C-terminal domain"/>
    <property type="match status" value="1"/>
</dbReference>
<dbReference type="Gene3D" id="3.30.1330.10">
    <property type="entry name" value="PurM-like, N-terminal domain"/>
    <property type="match status" value="1"/>
</dbReference>
<dbReference type="HAMAP" id="MF_00741">
    <property type="entry name" value="AIRS"/>
    <property type="match status" value="1"/>
</dbReference>
<dbReference type="InterPro" id="IPR010918">
    <property type="entry name" value="PurM-like_C_dom"/>
</dbReference>
<dbReference type="InterPro" id="IPR036676">
    <property type="entry name" value="PurM-like_C_sf"/>
</dbReference>
<dbReference type="InterPro" id="IPR016188">
    <property type="entry name" value="PurM-like_N"/>
</dbReference>
<dbReference type="InterPro" id="IPR036921">
    <property type="entry name" value="PurM-like_N_sf"/>
</dbReference>
<dbReference type="InterPro" id="IPR004733">
    <property type="entry name" value="PurM_cligase"/>
</dbReference>
<dbReference type="NCBIfam" id="TIGR00878">
    <property type="entry name" value="purM"/>
    <property type="match status" value="1"/>
</dbReference>
<dbReference type="PANTHER" id="PTHR10520:SF12">
    <property type="entry name" value="TRIFUNCTIONAL PURINE BIOSYNTHETIC PROTEIN ADENOSINE-3"/>
    <property type="match status" value="1"/>
</dbReference>
<dbReference type="PANTHER" id="PTHR10520">
    <property type="entry name" value="TRIFUNCTIONAL PURINE BIOSYNTHETIC PROTEIN ADENOSINE-3-RELATED"/>
    <property type="match status" value="1"/>
</dbReference>
<dbReference type="Pfam" id="PF00586">
    <property type="entry name" value="AIRS"/>
    <property type="match status" value="1"/>
</dbReference>
<dbReference type="Pfam" id="PF02769">
    <property type="entry name" value="AIRS_C"/>
    <property type="match status" value="1"/>
</dbReference>
<dbReference type="SUPFAM" id="SSF56042">
    <property type="entry name" value="PurM C-terminal domain-like"/>
    <property type="match status" value="1"/>
</dbReference>
<dbReference type="SUPFAM" id="SSF55326">
    <property type="entry name" value="PurM N-terminal domain-like"/>
    <property type="match status" value="1"/>
</dbReference>
<accession>A0LA23</accession>
<feature type="chain" id="PRO_1000046444" description="Phosphoribosylformylglycinamidine cyclo-ligase">
    <location>
        <begin position="1"/>
        <end position="353"/>
    </location>
</feature>
<reference key="1">
    <citation type="journal article" date="2009" name="Appl. Environ. Microbiol.">
        <title>Complete genome sequence of the chemolithoautotrophic marine magnetotactic coccus strain MC-1.</title>
        <authorList>
            <person name="Schubbe S."/>
            <person name="Williams T.J."/>
            <person name="Xie G."/>
            <person name="Kiss H.E."/>
            <person name="Brettin T.S."/>
            <person name="Martinez D."/>
            <person name="Ross C.A."/>
            <person name="Schuler D."/>
            <person name="Cox B.L."/>
            <person name="Nealson K.H."/>
            <person name="Bazylinski D.A."/>
        </authorList>
    </citation>
    <scope>NUCLEOTIDE SEQUENCE [LARGE SCALE GENOMIC DNA]</scope>
    <source>
        <strain>ATCC BAA-1437 / JCM 17883 / MC-1</strain>
    </source>
</reference>
<comment type="catalytic activity">
    <reaction evidence="1">
        <text>2-formamido-N(1)-(5-O-phospho-beta-D-ribosyl)acetamidine + ATP = 5-amino-1-(5-phospho-beta-D-ribosyl)imidazole + ADP + phosphate + H(+)</text>
        <dbReference type="Rhea" id="RHEA:23032"/>
        <dbReference type="ChEBI" id="CHEBI:15378"/>
        <dbReference type="ChEBI" id="CHEBI:30616"/>
        <dbReference type="ChEBI" id="CHEBI:43474"/>
        <dbReference type="ChEBI" id="CHEBI:137981"/>
        <dbReference type="ChEBI" id="CHEBI:147287"/>
        <dbReference type="ChEBI" id="CHEBI:456216"/>
        <dbReference type="EC" id="6.3.3.1"/>
    </reaction>
</comment>
<comment type="pathway">
    <text evidence="1">Purine metabolism; IMP biosynthesis via de novo pathway; 5-amino-1-(5-phospho-D-ribosyl)imidazole from N(2)-formyl-N(1)-(5-phospho-D-ribosyl)glycinamide: step 2/2.</text>
</comment>
<comment type="subcellular location">
    <subcellularLocation>
        <location evidence="1">Cytoplasm</location>
    </subcellularLocation>
</comment>
<comment type="similarity">
    <text evidence="1">Belongs to the AIR synthase family.</text>
</comment>
<proteinExistence type="inferred from homology"/>
<gene>
    <name evidence="1" type="primary">purM</name>
    <name type="ordered locus">Mmc1_2316</name>
</gene>
<organism>
    <name type="scientific">Magnetococcus marinus (strain ATCC BAA-1437 / JCM 17883 / MC-1)</name>
    <dbReference type="NCBI Taxonomy" id="156889"/>
    <lineage>
        <taxon>Bacteria</taxon>
        <taxon>Pseudomonadati</taxon>
        <taxon>Pseudomonadota</taxon>
        <taxon>Alphaproteobacteria</taxon>
        <taxon>Magnetococcales</taxon>
        <taxon>Magnetococcaceae</taxon>
        <taxon>Magnetococcus</taxon>
    </lineage>
</organism>
<evidence type="ECO:0000255" key="1">
    <source>
        <dbReference type="HAMAP-Rule" id="MF_00741"/>
    </source>
</evidence>
<name>PUR5_MAGMM</name>
<keyword id="KW-0067">ATP-binding</keyword>
<keyword id="KW-0963">Cytoplasm</keyword>
<keyword id="KW-0436">Ligase</keyword>
<keyword id="KW-0547">Nucleotide-binding</keyword>
<keyword id="KW-0658">Purine biosynthesis</keyword>
<keyword id="KW-1185">Reference proteome</keyword>